<feature type="chain" id="PRO_0000205272" description="Isopentenyl-diphosphate Delta-isomerase">
    <location>
        <begin position="1"/>
        <end position="213"/>
    </location>
</feature>
<feature type="domain" description="Nudix hydrolase">
    <location>
        <begin position="56"/>
        <end position="193"/>
    </location>
</feature>
<feature type="region of interest" description="Disordered" evidence="2">
    <location>
        <begin position="1"/>
        <end position="34"/>
    </location>
</feature>
<feature type="compositionally biased region" description="Basic and acidic residues" evidence="2">
    <location>
        <begin position="1"/>
        <end position="10"/>
    </location>
</feature>
<feature type="active site" evidence="1">
    <location>
        <position position="144"/>
    </location>
</feature>
<feature type="binding site" evidence="1">
    <location>
        <position position="51"/>
    </location>
    <ligand>
        <name>Mn(2+)</name>
        <dbReference type="ChEBI" id="CHEBI:29035"/>
    </ligand>
</feature>
<feature type="binding site" evidence="1">
    <location>
        <position position="58"/>
    </location>
    <ligand>
        <name>Mn(2+)</name>
        <dbReference type="ChEBI" id="CHEBI:29035"/>
    </ligand>
</feature>
<feature type="binding site" evidence="1">
    <location>
        <position position="95"/>
    </location>
    <ligand>
        <name>Mn(2+)</name>
        <dbReference type="ChEBI" id="CHEBI:29035"/>
    </ligand>
</feature>
<feature type="binding site" evidence="1">
    <location>
        <position position="113"/>
    </location>
    <ligand>
        <name>Mg(2+)</name>
        <dbReference type="ChEBI" id="CHEBI:18420"/>
    </ligand>
</feature>
<feature type="binding site" evidence="1">
    <location>
        <position position="142"/>
    </location>
    <ligand>
        <name>Mn(2+)</name>
        <dbReference type="ChEBI" id="CHEBI:29035"/>
    </ligand>
</feature>
<feature type="binding site" evidence="1">
    <location>
        <position position="144"/>
    </location>
    <ligand>
        <name>Mn(2+)</name>
        <dbReference type="ChEBI" id="CHEBI:29035"/>
    </ligand>
</feature>
<proteinExistence type="inferred from homology"/>
<evidence type="ECO:0000255" key="1">
    <source>
        <dbReference type="HAMAP-Rule" id="MF_00202"/>
    </source>
</evidence>
<evidence type="ECO:0000256" key="2">
    <source>
        <dbReference type="SAM" id="MobiDB-lite"/>
    </source>
</evidence>
<evidence type="ECO:0000305" key="3"/>
<sequence>MRDSMSEADRSSPGSGKTDREDETAENATQDVIAVTPDDERTGLANRLDAHTGDGVRHRAFTCLLFDEDGRVLLAQRADRKRLWDTHWDGTVASHPIEGQSQVDATRQRLAEELGIEPHQYDKLEITDRFEYKRRYLDEGLEWEVCAVLQATLHDTSFDRDPEEVGGAMWVDYEDLYENPRYYRQLRLCPWFEIAMRRDFEGDADPVPDGTRA</sequence>
<reference key="1">
    <citation type="journal article" date="2000" name="Proc. Natl. Acad. Sci. U.S.A.">
        <title>Genome sequence of Halobacterium species NRC-1.</title>
        <authorList>
            <person name="Ng W.V."/>
            <person name="Kennedy S.P."/>
            <person name="Mahairas G.G."/>
            <person name="Berquist B."/>
            <person name="Pan M."/>
            <person name="Shukla H.D."/>
            <person name="Lasky S.R."/>
            <person name="Baliga N.S."/>
            <person name="Thorsson V."/>
            <person name="Sbrogna J."/>
            <person name="Swartzell S."/>
            <person name="Weir D."/>
            <person name="Hall J."/>
            <person name="Dahl T.A."/>
            <person name="Welti R."/>
            <person name="Goo Y.A."/>
            <person name="Leithauser B."/>
            <person name="Keller K."/>
            <person name="Cruz R."/>
            <person name="Danson M.J."/>
            <person name="Hough D.W."/>
            <person name="Maddocks D.G."/>
            <person name="Jablonski P.E."/>
            <person name="Krebs M.P."/>
            <person name="Angevine C.M."/>
            <person name="Dale H."/>
            <person name="Isenbarger T.A."/>
            <person name="Peck R.F."/>
            <person name="Pohlschroder M."/>
            <person name="Spudich J.L."/>
            <person name="Jung K.-H."/>
            <person name="Alam M."/>
            <person name="Freitas T."/>
            <person name="Hou S."/>
            <person name="Daniels C.J."/>
            <person name="Dennis P.P."/>
            <person name="Omer A.D."/>
            <person name="Ebhardt H."/>
            <person name="Lowe T.M."/>
            <person name="Liang P."/>
            <person name="Riley M."/>
            <person name="Hood L."/>
            <person name="DasSarma S."/>
        </authorList>
    </citation>
    <scope>NUCLEOTIDE SEQUENCE [LARGE SCALE GENOMIC DNA]</scope>
    <source>
        <strain>ATCC 700922 / JCM 11081 / NRC-1</strain>
    </source>
</reference>
<name>IDI_HALSA</name>
<dbReference type="EC" id="5.3.3.2" evidence="1"/>
<dbReference type="EMBL" id="AE004437">
    <property type="protein sequence ID" value="AAG20030.1"/>
    <property type="molecule type" value="Genomic_DNA"/>
</dbReference>
<dbReference type="PIR" id="B84333">
    <property type="entry name" value="B84333"/>
</dbReference>
<dbReference type="SMR" id="Q9HP40"/>
<dbReference type="STRING" id="64091.VNG_1818G"/>
<dbReference type="PaxDb" id="64091-VNG_1818G"/>
<dbReference type="KEGG" id="hal:VNG_1818G"/>
<dbReference type="PATRIC" id="fig|64091.14.peg.1386"/>
<dbReference type="HOGENOM" id="CLU_060552_2_1_2"/>
<dbReference type="InParanoid" id="Q9HP40"/>
<dbReference type="OrthoDB" id="4234at2157"/>
<dbReference type="UniPathway" id="UPA00059">
    <property type="reaction ID" value="UER00104"/>
</dbReference>
<dbReference type="Proteomes" id="UP000000554">
    <property type="component" value="Chromosome"/>
</dbReference>
<dbReference type="GO" id="GO:0005737">
    <property type="term" value="C:cytoplasm"/>
    <property type="evidence" value="ECO:0000318"/>
    <property type="project" value="GO_Central"/>
</dbReference>
<dbReference type="GO" id="GO:0004452">
    <property type="term" value="F:isopentenyl-diphosphate delta-isomerase activity"/>
    <property type="evidence" value="ECO:0000318"/>
    <property type="project" value="GO_Central"/>
</dbReference>
<dbReference type="GO" id="GO:0046872">
    <property type="term" value="F:metal ion binding"/>
    <property type="evidence" value="ECO:0007669"/>
    <property type="project" value="UniProtKB-KW"/>
</dbReference>
<dbReference type="GO" id="GO:0050992">
    <property type="term" value="P:dimethylallyl diphosphate biosynthetic process"/>
    <property type="evidence" value="ECO:0007669"/>
    <property type="project" value="UniProtKB-UniRule"/>
</dbReference>
<dbReference type="GO" id="GO:0009240">
    <property type="term" value="P:isopentenyl diphosphate biosynthetic process"/>
    <property type="evidence" value="ECO:0000318"/>
    <property type="project" value="GO_Central"/>
</dbReference>
<dbReference type="CDD" id="cd02885">
    <property type="entry name" value="NUDIX_IPP_Isomerase"/>
    <property type="match status" value="1"/>
</dbReference>
<dbReference type="Gene3D" id="3.90.79.10">
    <property type="entry name" value="Nucleoside Triphosphate Pyrophosphohydrolase"/>
    <property type="match status" value="1"/>
</dbReference>
<dbReference type="HAMAP" id="MF_00202">
    <property type="entry name" value="Idi"/>
    <property type="match status" value="1"/>
</dbReference>
<dbReference type="InterPro" id="IPR056375">
    <property type="entry name" value="Idi_bact"/>
</dbReference>
<dbReference type="InterPro" id="IPR011876">
    <property type="entry name" value="IsopentenylPP_isomerase_typ1"/>
</dbReference>
<dbReference type="InterPro" id="IPR015797">
    <property type="entry name" value="NUDIX_hydrolase-like_dom_sf"/>
</dbReference>
<dbReference type="InterPro" id="IPR000086">
    <property type="entry name" value="NUDIX_hydrolase_dom"/>
</dbReference>
<dbReference type="PANTHER" id="PTHR10885">
    <property type="entry name" value="ISOPENTENYL-DIPHOSPHATE DELTA-ISOMERASE"/>
    <property type="match status" value="1"/>
</dbReference>
<dbReference type="PANTHER" id="PTHR10885:SF0">
    <property type="entry name" value="ISOPENTENYL-DIPHOSPHATE DELTA-ISOMERASE"/>
    <property type="match status" value="1"/>
</dbReference>
<dbReference type="Pfam" id="PF00293">
    <property type="entry name" value="NUDIX"/>
    <property type="match status" value="1"/>
</dbReference>
<dbReference type="PIRSF" id="PIRSF018427">
    <property type="entry name" value="Isopntndiph_ism"/>
    <property type="match status" value="1"/>
</dbReference>
<dbReference type="SUPFAM" id="SSF55811">
    <property type="entry name" value="Nudix"/>
    <property type="match status" value="1"/>
</dbReference>
<dbReference type="PROSITE" id="PS51462">
    <property type="entry name" value="NUDIX"/>
    <property type="match status" value="1"/>
</dbReference>
<keyword id="KW-0963">Cytoplasm</keyword>
<keyword id="KW-0413">Isomerase</keyword>
<keyword id="KW-0414">Isoprene biosynthesis</keyword>
<keyword id="KW-0460">Magnesium</keyword>
<keyword id="KW-0464">Manganese</keyword>
<keyword id="KW-0479">Metal-binding</keyword>
<keyword id="KW-1185">Reference proteome</keyword>
<gene>
    <name evidence="1" type="primary">idi</name>
    <name type="ordered locus">VNG_1818G</name>
</gene>
<comment type="function">
    <text evidence="1">Catalyzes the 1,3-allylic rearrangement of the homoallylic substrate isopentenyl (IPP) to its highly electrophilic allylic isomer, dimethylallyl diphosphate (DMAPP).</text>
</comment>
<comment type="catalytic activity">
    <reaction evidence="1">
        <text>isopentenyl diphosphate = dimethylallyl diphosphate</text>
        <dbReference type="Rhea" id="RHEA:23284"/>
        <dbReference type="ChEBI" id="CHEBI:57623"/>
        <dbReference type="ChEBI" id="CHEBI:128769"/>
        <dbReference type="EC" id="5.3.3.2"/>
    </reaction>
</comment>
<comment type="cofactor">
    <cofactor evidence="1">
        <name>Mg(2+)</name>
        <dbReference type="ChEBI" id="CHEBI:18420"/>
    </cofactor>
    <text evidence="1">Binds 1 Mg(2+) ion per subunit. The magnesium ion binds only when substrate is bound.</text>
</comment>
<comment type="cofactor">
    <cofactor evidence="1">
        <name>Mn(2+)</name>
        <dbReference type="ChEBI" id="CHEBI:29035"/>
    </cofactor>
    <text evidence="1">Binds 1 Mn(2+) ion per subunit.</text>
</comment>
<comment type="pathway">
    <text evidence="1">Isoprenoid biosynthesis; dimethylallyl diphosphate biosynthesis; dimethylallyl diphosphate from isopentenyl diphosphate: step 1/1.</text>
</comment>
<comment type="subcellular location">
    <subcellularLocation>
        <location evidence="1">Cytoplasm</location>
    </subcellularLocation>
</comment>
<comment type="similarity">
    <text evidence="1">Belongs to the IPP isomerase type 1 family.</text>
</comment>
<comment type="caution">
    <text evidence="3">Could lack activity as the potential active site Cys residue in position 93 is replaced by an Ala.</text>
</comment>
<protein>
    <recommendedName>
        <fullName evidence="1">Isopentenyl-diphosphate Delta-isomerase</fullName>
        <shortName evidence="1">IPP isomerase</shortName>
        <ecNumber evidence="1">5.3.3.2</ecNumber>
    </recommendedName>
    <alternativeName>
        <fullName evidence="1">IPP:DMAPP isomerase</fullName>
    </alternativeName>
    <alternativeName>
        <fullName evidence="1">Isopentenyl pyrophosphate isomerase</fullName>
    </alternativeName>
</protein>
<organism>
    <name type="scientific">Halobacterium salinarum (strain ATCC 700922 / JCM 11081 / NRC-1)</name>
    <name type="common">Halobacterium halobium</name>
    <dbReference type="NCBI Taxonomy" id="64091"/>
    <lineage>
        <taxon>Archaea</taxon>
        <taxon>Methanobacteriati</taxon>
        <taxon>Methanobacteriota</taxon>
        <taxon>Stenosarchaea group</taxon>
        <taxon>Halobacteria</taxon>
        <taxon>Halobacteriales</taxon>
        <taxon>Halobacteriaceae</taxon>
        <taxon>Halobacterium</taxon>
        <taxon>Halobacterium salinarum NRC-34001</taxon>
    </lineage>
</organism>
<accession>Q9HP40</accession>